<feature type="chain" id="PRO_0000180117" description="Acyl carrier protein">
    <location>
        <begin position="1"/>
        <end position="80"/>
    </location>
</feature>
<feature type="domain" description="Carrier" evidence="2">
    <location>
        <begin position="2"/>
        <end position="77"/>
    </location>
</feature>
<feature type="modified residue" description="O-(pantetheine 4'-phosphoryl)serine" evidence="2">
    <location>
        <position position="37"/>
    </location>
</feature>
<dbReference type="EMBL" id="BA000003">
    <property type="protein sequence ID" value="BAB13056.1"/>
    <property type="molecule type" value="Genomic_DNA"/>
</dbReference>
<dbReference type="RefSeq" id="NP_240170.1">
    <property type="nucleotide sequence ID" value="NC_002528.1"/>
</dbReference>
<dbReference type="RefSeq" id="WP_010896080.1">
    <property type="nucleotide sequence ID" value="NZ_AP036055.1"/>
</dbReference>
<dbReference type="SMR" id="P57433"/>
<dbReference type="STRING" id="563178.BUAP5A_345"/>
<dbReference type="EnsemblBacteria" id="BAB13056">
    <property type="protein sequence ID" value="BAB13056"/>
    <property type="gene ID" value="BAB13056"/>
</dbReference>
<dbReference type="KEGG" id="buc:BU352"/>
<dbReference type="PATRIC" id="fig|107806.10.peg.365"/>
<dbReference type="eggNOG" id="COG0236">
    <property type="taxonomic scope" value="Bacteria"/>
</dbReference>
<dbReference type="HOGENOM" id="CLU_108696_5_1_6"/>
<dbReference type="UniPathway" id="UPA00094"/>
<dbReference type="Proteomes" id="UP000001806">
    <property type="component" value="Chromosome"/>
</dbReference>
<dbReference type="GO" id="GO:0005829">
    <property type="term" value="C:cytosol"/>
    <property type="evidence" value="ECO:0007669"/>
    <property type="project" value="TreeGrafter"/>
</dbReference>
<dbReference type="GO" id="GO:0016020">
    <property type="term" value="C:membrane"/>
    <property type="evidence" value="ECO:0007669"/>
    <property type="project" value="GOC"/>
</dbReference>
<dbReference type="GO" id="GO:0000035">
    <property type="term" value="F:acyl binding"/>
    <property type="evidence" value="ECO:0007669"/>
    <property type="project" value="TreeGrafter"/>
</dbReference>
<dbReference type="GO" id="GO:0000036">
    <property type="term" value="F:acyl carrier activity"/>
    <property type="evidence" value="ECO:0007669"/>
    <property type="project" value="UniProtKB-UniRule"/>
</dbReference>
<dbReference type="GO" id="GO:0009245">
    <property type="term" value="P:lipid A biosynthetic process"/>
    <property type="evidence" value="ECO:0007669"/>
    <property type="project" value="TreeGrafter"/>
</dbReference>
<dbReference type="FunFam" id="1.10.1200.10:FF:000001">
    <property type="entry name" value="Acyl carrier protein"/>
    <property type="match status" value="1"/>
</dbReference>
<dbReference type="Gene3D" id="1.10.1200.10">
    <property type="entry name" value="ACP-like"/>
    <property type="match status" value="1"/>
</dbReference>
<dbReference type="HAMAP" id="MF_01217">
    <property type="entry name" value="Acyl_carrier"/>
    <property type="match status" value="1"/>
</dbReference>
<dbReference type="InterPro" id="IPR003231">
    <property type="entry name" value="ACP"/>
</dbReference>
<dbReference type="InterPro" id="IPR036736">
    <property type="entry name" value="ACP-like_sf"/>
</dbReference>
<dbReference type="InterPro" id="IPR009081">
    <property type="entry name" value="PP-bd_ACP"/>
</dbReference>
<dbReference type="InterPro" id="IPR006162">
    <property type="entry name" value="Ppantetheine_attach_site"/>
</dbReference>
<dbReference type="NCBIfam" id="TIGR00517">
    <property type="entry name" value="acyl_carrier"/>
    <property type="match status" value="1"/>
</dbReference>
<dbReference type="NCBIfam" id="NF002148">
    <property type="entry name" value="PRK00982.1-2"/>
    <property type="match status" value="1"/>
</dbReference>
<dbReference type="NCBIfam" id="NF002149">
    <property type="entry name" value="PRK00982.1-3"/>
    <property type="match status" value="1"/>
</dbReference>
<dbReference type="NCBIfam" id="NF002150">
    <property type="entry name" value="PRK00982.1-4"/>
    <property type="match status" value="1"/>
</dbReference>
<dbReference type="NCBIfam" id="NF002151">
    <property type="entry name" value="PRK00982.1-5"/>
    <property type="match status" value="1"/>
</dbReference>
<dbReference type="PANTHER" id="PTHR20863">
    <property type="entry name" value="ACYL CARRIER PROTEIN"/>
    <property type="match status" value="1"/>
</dbReference>
<dbReference type="PANTHER" id="PTHR20863:SF76">
    <property type="entry name" value="CARRIER DOMAIN-CONTAINING PROTEIN"/>
    <property type="match status" value="1"/>
</dbReference>
<dbReference type="Pfam" id="PF00550">
    <property type="entry name" value="PP-binding"/>
    <property type="match status" value="1"/>
</dbReference>
<dbReference type="SUPFAM" id="SSF47336">
    <property type="entry name" value="ACP-like"/>
    <property type="match status" value="1"/>
</dbReference>
<dbReference type="PROSITE" id="PS50075">
    <property type="entry name" value="CARRIER"/>
    <property type="match status" value="1"/>
</dbReference>
<dbReference type="PROSITE" id="PS00012">
    <property type="entry name" value="PHOSPHOPANTETHEINE"/>
    <property type="match status" value="1"/>
</dbReference>
<organism>
    <name type="scientific">Buchnera aphidicola subsp. Acyrthosiphon pisum (strain APS)</name>
    <name type="common">Acyrthosiphon pisum symbiotic bacterium</name>
    <dbReference type="NCBI Taxonomy" id="107806"/>
    <lineage>
        <taxon>Bacteria</taxon>
        <taxon>Pseudomonadati</taxon>
        <taxon>Pseudomonadota</taxon>
        <taxon>Gammaproteobacteria</taxon>
        <taxon>Enterobacterales</taxon>
        <taxon>Erwiniaceae</taxon>
        <taxon>Buchnera</taxon>
    </lineage>
</organism>
<protein>
    <recommendedName>
        <fullName evidence="1">Acyl carrier protein</fullName>
        <shortName evidence="1">ACP</shortName>
    </recommendedName>
</protein>
<comment type="function">
    <text evidence="1">Carrier of the growing fatty acid chain in fatty acid biosynthesis.</text>
</comment>
<comment type="pathway">
    <text evidence="1">Lipid metabolism; fatty acid biosynthesis.</text>
</comment>
<comment type="subcellular location">
    <subcellularLocation>
        <location evidence="1">Cytoplasm</location>
    </subcellularLocation>
</comment>
<comment type="PTM">
    <text evidence="1">4'-phosphopantetheine is transferred from CoA to a specific serine of apo-ACP by AcpS. This modification is essential for activity because fatty acids are bound in thioester linkage to the sulfhydryl of the prosthetic group.</text>
</comment>
<comment type="similarity">
    <text evidence="1">Belongs to the acyl carrier protein (ACP) family.</text>
</comment>
<accession>P57433</accession>
<name>ACP_BUCAI</name>
<reference key="1">
    <citation type="journal article" date="2000" name="Nature">
        <title>Genome sequence of the endocellular bacterial symbiont of aphids Buchnera sp. APS.</title>
        <authorList>
            <person name="Shigenobu S."/>
            <person name="Watanabe H."/>
            <person name="Hattori M."/>
            <person name="Sakaki Y."/>
            <person name="Ishikawa H."/>
        </authorList>
    </citation>
    <scope>NUCLEOTIDE SEQUENCE [LARGE SCALE GENOMIC DNA]</scope>
    <source>
        <strain>APS</strain>
    </source>
</reference>
<keyword id="KW-0963">Cytoplasm</keyword>
<keyword id="KW-0275">Fatty acid biosynthesis</keyword>
<keyword id="KW-0276">Fatty acid metabolism</keyword>
<keyword id="KW-0444">Lipid biosynthesis</keyword>
<keyword id="KW-0443">Lipid metabolism</keyword>
<keyword id="KW-0596">Phosphopantetheine</keyword>
<keyword id="KW-0597">Phosphoprotein</keyword>
<keyword id="KW-1185">Reference proteome</keyword>
<proteinExistence type="inferred from homology"/>
<sequence>MKNIEERIKKIIFEKLDIKQEKIFNDASFIDDLGADSLDTVELIMALEEEFDIEISDEEAEKINTVQKSIDFIQKKNLKK</sequence>
<gene>
    <name evidence="1" type="primary">acpP</name>
    <name type="ordered locus">BU352</name>
</gene>
<evidence type="ECO:0000255" key="1">
    <source>
        <dbReference type="HAMAP-Rule" id="MF_01217"/>
    </source>
</evidence>
<evidence type="ECO:0000255" key="2">
    <source>
        <dbReference type="PROSITE-ProRule" id="PRU00258"/>
    </source>
</evidence>